<comment type="function">
    <text evidence="2">E3 ubiquitin-protein ligase involved in ER-associated protein degradation, preferentially associates with the E2 enzyme UBE2J2. Exploited by viral US11 proteins to mediate HLA class I proteins degradation.</text>
</comment>
<comment type="catalytic activity">
    <reaction>
        <text>S-ubiquitinyl-[E2 ubiquitin-conjugating enzyme]-L-cysteine + [acceptor protein]-L-lysine = [E2 ubiquitin-conjugating enzyme]-L-cysteine + N(6)-ubiquitinyl-[acceptor protein]-L-lysine.</text>
        <dbReference type="EC" id="2.3.2.27"/>
    </reaction>
</comment>
<comment type="pathway">
    <text>Protein modification; protein ubiquitination.</text>
</comment>
<comment type="subunit">
    <text>Integral component of ER-resident dislocation complexes.</text>
</comment>
<comment type="interaction">
    <interactant intactId="EBI-25871541">
        <id>A0AVI4-2</id>
    </interactant>
    <interactant intactId="EBI-352682">
        <id>P04792</id>
        <label>HSPB1</label>
    </interactant>
    <organismsDiffer>false</organismsDiffer>
    <experiments>3</experiments>
</comment>
<comment type="interaction">
    <interactant intactId="EBI-25871541">
        <id>A0AVI4-2</id>
    </interactant>
    <interactant intactId="EBI-711909">
        <id>P02766</id>
        <label>TTR</label>
    </interactant>
    <organismsDiffer>false</organismsDiffer>
    <experiments>3</experiments>
</comment>
<comment type="interaction">
    <interactant intactId="EBI-25871541">
        <id>A0AVI4-2</id>
    </interactant>
    <interactant intactId="EBI-720609">
        <id>O76024</id>
        <label>WFS1</label>
    </interactant>
    <organismsDiffer>false</organismsDiffer>
    <experiments>3</experiments>
</comment>
<comment type="subcellular location">
    <subcellularLocation>
        <location evidence="2">Endoplasmic reticulum membrane</location>
        <topology evidence="2">Multi-pass membrane protein</topology>
    </subcellularLocation>
</comment>
<comment type="alternative products">
    <event type="alternative splicing"/>
    <isoform>
        <id>A0AVI4-1</id>
        <name>1</name>
        <sequence type="displayed"/>
    </isoform>
    <isoform>
        <id>A0AVI4-2</id>
        <name>2</name>
        <sequence type="described" ref="VSP_036641 VSP_036642"/>
    </isoform>
</comment>
<comment type="domain">
    <text>The RING-type zinc finger domain is responsible for E3 ubiquitin ligase activity.</text>
</comment>
<comment type="similarity">
    <text evidence="4">Belongs to the TMEM129 family.</text>
</comment>
<feature type="chain" id="PRO_0000291041" description="E3 ubiquitin-protein ligase TM129">
    <location>
        <begin position="1"/>
        <end position="362"/>
    </location>
</feature>
<feature type="topological domain" description="Lumenal" evidence="1">
    <location>
        <begin position="1"/>
        <end position="6"/>
    </location>
</feature>
<feature type="transmembrane region" description="Helical" evidence="1">
    <location>
        <begin position="7"/>
        <end position="27"/>
    </location>
</feature>
<feature type="topological domain" description="Cytoplasmic" evidence="1">
    <location>
        <begin position="28"/>
        <end position="56"/>
    </location>
</feature>
<feature type="transmembrane region" description="Helical" evidence="1">
    <location>
        <begin position="57"/>
        <end position="77"/>
    </location>
</feature>
<feature type="topological domain" description="Lumenal" evidence="1">
    <location>
        <begin position="78"/>
        <end position="94"/>
    </location>
</feature>
<feature type="transmembrane region" description="Helical" evidence="1">
    <location>
        <begin position="95"/>
        <end position="115"/>
    </location>
</feature>
<feature type="topological domain" description="Cytoplasmic" evidence="1">
    <location>
        <begin position="116"/>
        <end position="362"/>
    </location>
</feature>
<feature type="zinc finger region" description="RING-type; degenerate">
    <location>
        <begin position="285"/>
        <end position="350"/>
    </location>
</feature>
<feature type="splice variant" id="VSP_036641" description="In isoform 2." evidence="3">
    <original>LNSTE</original>
    <variation>SWRPA</variation>
    <location>
        <begin position="228"/>
        <end position="232"/>
    </location>
</feature>
<feature type="splice variant" id="VSP_036642" description="In isoform 2." evidence="3">
    <location>
        <begin position="233"/>
        <end position="362"/>
    </location>
</feature>
<feature type="sequence variant" id="VAR_032803" description="In dbSNP:rs798752.">
    <original>L</original>
    <variation>I</variation>
    <location>
        <position position="83"/>
    </location>
</feature>
<name>TM129_HUMAN</name>
<evidence type="ECO:0000255" key="1"/>
<evidence type="ECO:0000269" key="2">
    <source>
    </source>
</evidence>
<evidence type="ECO:0000303" key="3">
    <source>
    </source>
</evidence>
<evidence type="ECO:0000305" key="4"/>
<organism>
    <name type="scientific">Homo sapiens</name>
    <name type="common">Human</name>
    <dbReference type="NCBI Taxonomy" id="9606"/>
    <lineage>
        <taxon>Eukaryota</taxon>
        <taxon>Metazoa</taxon>
        <taxon>Chordata</taxon>
        <taxon>Craniata</taxon>
        <taxon>Vertebrata</taxon>
        <taxon>Euteleostomi</taxon>
        <taxon>Mammalia</taxon>
        <taxon>Eutheria</taxon>
        <taxon>Euarchontoglires</taxon>
        <taxon>Primates</taxon>
        <taxon>Haplorrhini</taxon>
        <taxon>Catarrhini</taxon>
        <taxon>Hominidae</taxon>
        <taxon>Homo</taxon>
    </lineage>
</organism>
<proteinExistence type="evidence at protein level"/>
<reference key="1">
    <citation type="journal article" date="2005" name="Nature">
        <title>Generation and annotation of the DNA sequences of human chromosomes 2 and 4.</title>
        <authorList>
            <person name="Hillier L.W."/>
            <person name="Graves T.A."/>
            <person name="Fulton R.S."/>
            <person name="Fulton L.A."/>
            <person name="Pepin K.H."/>
            <person name="Minx P."/>
            <person name="Wagner-McPherson C."/>
            <person name="Layman D."/>
            <person name="Wylie K."/>
            <person name="Sekhon M."/>
            <person name="Becker M.C."/>
            <person name="Fewell G.A."/>
            <person name="Delehaunty K.D."/>
            <person name="Miner T.L."/>
            <person name="Nash W.E."/>
            <person name="Kremitzki C."/>
            <person name="Oddy L."/>
            <person name="Du H."/>
            <person name="Sun H."/>
            <person name="Bradshaw-Cordum H."/>
            <person name="Ali J."/>
            <person name="Carter J."/>
            <person name="Cordes M."/>
            <person name="Harris A."/>
            <person name="Isak A."/>
            <person name="van Brunt A."/>
            <person name="Nguyen C."/>
            <person name="Du F."/>
            <person name="Courtney L."/>
            <person name="Kalicki J."/>
            <person name="Ozersky P."/>
            <person name="Abbott S."/>
            <person name="Armstrong J."/>
            <person name="Belter E.A."/>
            <person name="Caruso L."/>
            <person name="Cedroni M."/>
            <person name="Cotton M."/>
            <person name="Davidson T."/>
            <person name="Desai A."/>
            <person name="Elliott G."/>
            <person name="Erb T."/>
            <person name="Fronick C."/>
            <person name="Gaige T."/>
            <person name="Haakenson W."/>
            <person name="Haglund K."/>
            <person name="Holmes A."/>
            <person name="Harkins R."/>
            <person name="Kim K."/>
            <person name="Kruchowski S.S."/>
            <person name="Strong C.M."/>
            <person name="Grewal N."/>
            <person name="Goyea E."/>
            <person name="Hou S."/>
            <person name="Levy A."/>
            <person name="Martinka S."/>
            <person name="Mead K."/>
            <person name="McLellan M.D."/>
            <person name="Meyer R."/>
            <person name="Randall-Maher J."/>
            <person name="Tomlinson C."/>
            <person name="Dauphin-Kohlberg S."/>
            <person name="Kozlowicz-Reilly A."/>
            <person name="Shah N."/>
            <person name="Swearengen-Shahid S."/>
            <person name="Snider J."/>
            <person name="Strong J.T."/>
            <person name="Thompson J."/>
            <person name="Yoakum M."/>
            <person name="Leonard S."/>
            <person name="Pearman C."/>
            <person name="Trani L."/>
            <person name="Radionenko M."/>
            <person name="Waligorski J.E."/>
            <person name="Wang C."/>
            <person name="Rock S.M."/>
            <person name="Tin-Wollam A.-M."/>
            <person name="Maupin R."/>
            <person name="Latreille P."/>
            <person name="Wendl M.C."/>
            <person name="Yang S.-P."/>
            <person name="Pohl C."/>
            <person name="Wallis J.W."/>
            <person name="Spieth J."/>
            <person name="Bieri T.A."/>
            <person name="Berkowicz N."/>
            <person name="Nelson J.O."/>
            <person name="Osborne J."/>
            <person name="Ding L."/>
            <person name="Meyer R."/>
            <person name="Sabo A."/>
            <person name="Shotland Y."/>
            <person name="Sinha P."/>
            <person name="Wohldmann P.E."/>
            <person name="Cook L.L."/>
            <person name="Hickenbotham M.T."/>
            <person name="Eldred J."/>
            <person name="Williams D."/>
            <person name="Jones T.A."/>
            <person name="She X."/>
            <person name="Ciccarelli F.D."/>
            <person name="Izaurralde E."/>
            <person name="Taylor J."/>
            <person name="Schmutz J."/>
            <person name="Myers R.M."/>
            <person name="Cox D.R."/>
            <person name="Huang X."/>
            <person name="McPherson J.D."/>
            <person name="Mardis E.R."/>
            <person name="Clifton S.W."/>
            <person name="Warren W.C."/>
            <person name="Chinwalla A.T."/>
            <person name="Eddy S.R."/>
            <person name="Marra M.A."/>
            <person name="Ovcharenko I."/>
            <person name="Furey T.S."/>
            <person name="Miller W."/>
            <person name="Eichler E.E."/>
            <person name="Bork P."/>
            <person name="Suyama M."/>
            <person name="Torrents D."/>
            <person name="Waterston R.H."/>
            <person name="Wilson R.K."/>
        </authorList>
    </citation>
    <scope>NUCLEOTIDE SEQUENCE [LARGE SCALE GENOMIC DNA]</scope>
</reference>
<reference key="2">
    <citation type="submission" date="2005-09" db="EMBL/GenBank/DDBJ databases">
        <authorList>
            <person name="Mural R.J."/>
            <person name="Istrail S."/>
            <person name="Sutton G.G."/>
            <person name="Florea L."/>
            <person name="Halpern A.L."/>
            <person name="Mobarry C.M."/>
            <person name="Lippert R."/>
            <person name="Walenz B."/>
            <person name="Shatkay H."/>
            <person name="Dew I."/>
            <person name="Miller J.R."/>
            <person name="Flanigan M.J."/>
            <person name="Edwards N.J."/>
            <person name="Bolanos R."/>
            <person name="Fasulo D."/>
            <person name="Halldorsson B.V."/>
            <person name="Hannenhalli S."/>
            <person name="Turner R."/>
            <person name="Yooseph S."/>
            <person name="Lu F."/>
            <person name="Nusskern D.R."/>
            <person name="Shue B.C."/>
            <person name="Zheng X.H."/>
            <person name="Zhong F."/>
            <person name="Delcher A.L."/>
            <person name="Huson D.H."/>
            <person name="Kravitz S.A."/>
            <person name="Mouchard L."/>
            <person name="Reinert K."/>
            <person name="Remington K.A."/>
            <person name="Clark A.G."/>
            <person name="Waterman M.S."/>
            <person name="Eichler E.E."/>
            <person name="Adams M.D."/>
            <person name="Hunkapiller M.W."/>
            <person name="Myers E.W."/>
            <person name="Venter J.C."/>
        </authorList>
    </citation>
    <scope>NUCLEOTIDE SEQUENCE [LARGE SCALE GENOMIC DNA]</scope>
</reference>
<reference key="3">
    <citation type="journal article" date="2004" name="Genome Res.">
        <title>The status, quality, and expansion of the NIH full-length cDNA project: the Mammalian Gene Collection (MGC).</title>
        <authorList>
            <consortium name="The MGC Project Team"/>
        </authorList>
    </citation>
    <scope>NUCLEOTIDE SEQUENCE [LARGE SCALE MRNA] (ISOFORMS 1 AND 2)</scope>
</reference>
<reference key="4">
    <citation type="journal article" date="2014" name="Nat. Commun.">
        <title>A high-coverage shRNA screen identifies TMEM129 as an E3 ligase involved in ER-associated protein degradation.</title>
        <authorList>
            <person name="van de Weijer M.L."/>
            <person name="Bassik M.C."/>
            <person name="Luteijn R.D."/>
            <person name="Voorburg C.M."/>
            <person name="Lohuis M.A."/>
            <person name="Kremmer E."/>
            <person name="Hoeben R.C."/>
            <person name="Leproust E.M."/>
            <person name="Chen S."/>
            <person name="Hoelen H."/>
            <person name="Ressing M.E."/>
            <person name="Patena W."/>
            <person name="Weissman J.S."/>
            <person name="McManus M.T."/>
            <person name="Wiertz E.J."/>
            <person name="Lebbink R.J."/>
        </authorList>
    </citation>
    <scope>FUNCTION</scope>
    <scope>CATALYTIC ACTIVITY</scope>
    <scope>TOPOLOGY</scope>
    <scope>SUBCELLULAR LOCATION</scope>
</reference>
<gene>
    <name type="primary">TMEM129</name>
</gene>
<protein>
    <recommendedName>
        <fullName>E3 ubiquitin-protein ligase TM129</fullName>
        <ecNumber>2.3.2.27</ecNumber>
    </recommendedName>
    <alternativeName>
        <fullName evidence="4">RING-type E3 ubiquitin transferase TM129</fullName>
    </alternativeName>
</protein>
<accession>A0AVI4</accession>
<accession>A6NH49</accession>
<accession>A6NI98</accession>
<accession>D3DVP8</accession>
<sequence length="362" mass="40464">MDSPEVTFTLAYLVFAVCFVFTPNEFHAAGLTVQNLLSGWLGSEDAAFVPFHLRRTAATLLCHSLLPLGYYVGMCLAASEKRLHALSQAPEAWRLFLLLAVTLPSIACILIYYWSRDRWACHPLARTLALYALPQSGWQAVASSVNTEFRRIDKFATGAPGARVIVTDTWVMKVTTYRVHVAQQQDVHLTVTESRQHELSPDSNLPVQLLTIRVASTNPAVQAFDIWLNSTEYGELCEKLRAPIRRAAHVVIHQSLGDLFLETFASLVEVNPAYSVPSSQELEACIGCMQTRASVKLVKTCQEAATGECQQCYCRPMWCLTCMGKWFASRQDPLRPDTWLASRVPCPTCRARFCILDVCTVR</sequence>
<keyword id="KW-0025">Alternative splicing</keyword>
<keyword id="KW-0256">Endoplasmic reticulum</keyword>
<keyword id="KW-0472">Membrane</keyword>
<keyword id="KW-0479">Metal-binding</keyword>
<keyword id="KW-1267">Proteomics identification</keyword>
<keyword id="KW-1185">Reference proteome</keyword>
<keyword id="KW-0808">Transferase</keyword>
<keyword id="KW-0812">Transmembrane</keyword>
<keyword id="KW-1133">Transmembrane helix</keyword>
<keyword id="KW-0833">Ubl conjugation pathway</keyword>
<keyword id="KW-0834">Unfolded protein response</keyword>
<keyword id="KW-0862">Zinc</keyword>
<keyword id="KW-0863">Zinc-finger</keyword>
<dbReference type="EC" id="2.3.2.27"/>
<dbReference type="EMBL" id="AC016773">
    <property type="status" value="NOT_ANNOTATED_CDS"/>
    <property type="molecule type" value="Genomic_DNA"/>
</dbReference>
<dbReference type="EMBL" id="CH471131">
    <property type="protein sequence ID" value="EAW82569.1"/>
    <property type="molecule type" value="Genomic_DNA"/>
</dbReference>
<dbReference type="EMBL" id="CH471131">
    <property type="protein sequence ID" value="EAW82570.1"/>
    <property type="molecule type" value="Genomic_DNA"/>
</dbReference>
<dbReference type="EMBL" id="CH471131">
    <property type="protein sequence ID" value="EAW82571.1"/>
    <property type="molecule type" value="Genomic_DNA"/>
</dbReference>
<dbReference type="EMBL" id="BC009331">
    <property type="status" value="NOT_ANNOTATED_CDS"/>
    <property type="molecule type" value="mRNA"/>
</dbReference>
<dbReference type="EMBL" id="BC126370">
    <property type="protein sequence ID" value="AAI26371.1"/>
    <property type="molecule type" value="mRNA"/>
</dbReference>
<dbReference type="CCDS" id="CCDS3351.1">
    <molecule id="A0AVI4-2"/>
</dbReference>
<dbReference type="CCDS" id="CCDS46998.1">
    <molecule id="A0AVI4-1"/>
</dbReference>
<dbReference type="RefSeq" id="NP_001120738.1">
    <molecule id="A0AVI4-1"/>
    <property type="nucleotide sequence ID" value="NM_001127266.2"/>
</dbReference>
<dbReference type="RefSeq" id="NP_612394.1">
    <molecule id="A0AVI4-2"/>
    <property type="nucleotide sequence ID" value="NM_138385.4"/>
</dbReference>
<dbReference type="BioGRID" id="124932">
    <property type="interactions" value="49"/>
</dbReference>
<dbReference type="FunCoup" id="A0AVI4">
    <property type="interactions" value="1768"/>
</dbReference>
<dbReference type="IntAct" id="A0AVI4">
    <property type="interactions" value="7"/>
</dbReference>
<dbReference type="MINT" id="A0AVI4"/>
<dbReference type="STRING" id="9606.ENSP00000372394"/>
<dbReference type="iPTMnet" id="A0AVI4"/>
<dbReference type="PhosphoSitePlus" id="A0AVI4"/>
<dbReference type="BioMuta" id="TMEM129"/>
<dbReference type="jPOST" id="A0AVI4"/>
<dbReference type="MassIVE" id="A0AVI4"/>
<dbReference type="PaxDb" id="9606-ENSP00000372394"/>
<dbReference type="PeptideAtlas" id="A0AVI4"/>
<dbReference type="ProteomicsDB" id="22">
    <molecule id="A0AVI4-1"/>
</dbReference>
<dbReference type="ProteomicsDB" id="23">
    <molecule id="A0AVI4-2"/>
</dbReference>
<dbReference type="Pumba" id="A0AVI4"/>
<dbReference type="Antibodypedia" id="64956">
    <property type="antibodies" value="7 antibodies from 5 providers"/>
</dbReference>
<dbReference type="DNASU" id="92305"/>
<dbReference type="Ensembl" id="ENST00000303277.6">
    <molecule id="A0AVI4-2"/>
    <property type="protein sequence ID" value="ENSP00000305243.2"/>
    <property type="gene ID" value="ENSG00000168936.12"/>
</dbReference>
<dbReference type="Ensembl" id="ENST00000382936.8">
    <molecule id="A0AVI4-1"/>
    <property type="protein sequence ID" value="ENSP00000372394.3"/>
    <property type="gene ID" value="ENSG00000168936.12"/>
</dbReference>
<dbReference type="GeneID" id="92305"/>
<dbReference type="KEGG" id="hsa:92305"/>
<dbReference type="MANE-Select" id="ENST00000382936.8">
    <property type="protein sequence ID" value="ENSP00000372394.3"/>
    <property type="RefSeq nucleotide sequence ID" value="NM_001127266.2"/>
    <property type="RefSeq protein sequence ID" value="NP_001120738.1"/>
</dbReference>
<dbReference type="UCSC" id="uc003gdm.4">
    <molecule id="A0AVI4-1"/>
    <property type="organism name" value="human"/>
</dbReference>
<dbReference type="AGR" id="HGNC:25137"/>
<dbReference type="CTD" id="92305"/>
<dbReference type="DisGeNET" id="92305"/>
<dbReference type="GeneCards" id="TMEM129"/>
<dbReference type="HGNC" id="HGNC:25137">
    <property type="gene designation" value="TMEM129"/>
</dbReference>
<dbReference type="HPA" id="ENSG00000168936">
    <property type="expression patterns" value="Low tissue specificity"/>
</dbReference>
<dbReference type="MIM" id="615975">
    <property type="type" value="gene"/>
</dbReference>
<dbReference type="neXtProt" id="NX_A0AVI4"/>
<dbReference type="OpenTargets" id="ENSG00000168936"/>
<dbReference type="PharmGKB" id="PA143485649"/>
<dbReference type="VEuPathDB" id="HostDB:ENSG00000168936"/>
<dbReference type="eggNOG" id="KOG3899">
    <property type="taxonomic scope" value="Eukaryota"/>
</dbReference>
<dbReference type="GeneTree" id="ENSGT00390000013284"/>
<dbReference type="HOGENOM" id="CLU_048119_0_0_1"/>
<dbReference type="InParanoid" id="A0AVI4"/>
<dbReference type="OMA" id="KFATGPP"/>
<dbReference type="OrthoDB" id="10055027at2759"/>
<dbReference type="PAN-GO" id="A0AVI4">
    <property type="GO annotations" value="2 GO annotations based on evolutionary models"/>
</dbReference>
<dbReference type="PhylomeDB" id="A0AVI4"/>
<dbReference type="TreeFam" id="TF314487"/>
<dbReference type="PathwayCommons" id="A0AVI4"/>
<dbReference type="Reactome" id="R-HSA-8866654">
    <property type="pathway name" value="E3 ubiquitin ligases ubiquitinate target proteins"/>
</dbReference>
<dbReference type="SignaLink" id="A0AVI4"/>
<dbReference type="SIGNOR" id="A0AVI4"/>
<dbReference type="UniPathway" id="UPA00143"/>
<dbReference type="BioGRID-ORCS" id="92305">
    <property type="hits" value="8 hits in 1189 CRISPR screens"/>
</dbReference>
<dbReference type="GenomeRNAi" id="92305"/>
<dbReference type="Pharos" id="A0AVI4">
    <property type="development level" value="Tbio"/>
</dbReference>
<dbReference type="PRO" id="PR:A0AVI4"/>
<dbReference type="Proteomes" id="UP000005640">
    <property type="component" value="Chromosome 4"/>
</dbReference>
<dbReference type="RNAct" id="A0AVI4">
    <property type="molecule type" value="protein"/>
</dbReference>
<dbReference type="Bgee" id="ENSG00000168936">
    <property type="expression patterns" value="Expressed in tendon of biceps brachii and 179 other cell types or tissues"/>
</dbReference>
<dbReference type="ExpressionAtlas" id="A0AVI4">
    <property type="expression patterns" value="baseline and differential"/>
</dbReference>
<dbReference type="GO" id="GO:0005783">
    <property type="term" value="C:endoplasmic reticulum"/>
    <property type="evidence" value="ECO:0000314"/>
    <property type="project" value="ParkinsonsUK-UCL"/>
</dbReference>
<dbReference type="GO" id="GO:0005789">
    <property type="term" value="C:endoplasmic reticulum membrane"/>
    <property type="evidence" value="ECO:0000304"/>
    <property type="project" value="Reactome"/>
</dbReference>
<dbReference type="GO" id="GO:0061630">
    <property type="term" value="F:ubiquitin protein ligase activity"/>
    <property type="evidence" value="ECO:0000314"/>
    <property type="project" value="ParkinsonsUK-UCL"/>
</dbReference>
<dbReference type="GO" id="GO:0008270">
    <property type="term" value="F:zinc ion binding"/>
    <property type="evidence" value="ECO:0007669"/>
    <property type="project" value="UniProtKB-KW"/>
</dbReference>
<dbReference type="GO" id="GO:0036503">
    <property type="term" value="P:ERAD pathway"/>
    <property type="evidence" value="ECO:0000315"/>
    <property type="project" value="ParkinsonsUK-UCL"/>
</dbReference>
<dbReference type="GO" id="GO:0000209">
    <property type="term" value="P:protein polyubiquitination"/>
    <property type="evidence" value="ECO:0000314"/>
    <property type="project" value="ParkinsonsUK-UCL"/>
</dbReference>
<dbReference type="GO" id="GO:0016567">
    <property type="term" value="P:protein ubiquitination"/>
    <property type="evidence" value="ECO:0000304"/>
    <property type="project" value="Reactome"/>
</dbReference>
<dbReference type="GO" id="GO:0006986">
    <property type="term" value="P:response to unfolded protein"/>
    <property type="evidence" value="ECO:0007669"/>
    <property type="project" value="UniProtKB-KW"/>
</dbReference>
<dbReference type="GO" id="GO:0030970">
    <property type="term" value="P:retrograde protein transport, ER to cytosol"/>
    <property type="evidence" value="ECO:0000315"/>
    <property type="project" value="ParkinsonsUK-UCL"/>
</dbReference>
<dbReference type="GO" id="GO:0006511">
    <property type="term" value="P:ubiquitin-dependent protein catabolic process"/>
    <property type="evidence" value="ECO:0000314"/>
    <property type="project" value="ParkinsonsUK-UCL"/>
</dbReference>
<dbReference type="InterPro" id="IPR018801">
    <property type="entry name" value="TM129"/>
</dbReference>
<dbReference type="PANTHER" id="PTHR31322">
    <property type="entry name" value="E3 UBIQUITIN-PROTEIN LIGASE TM129"/>
    <property type="match status" value="1"/>
</dbReference>
<dbReference type="PANTHER" id="PTHR31322:SF2">
    <property type="entry name" value="E3 UBIQUITIN-PROTEIN LIGASE TM129"/>
    <property type="match status" value="1"/>
</dbReference>
<dbReference type="Pfam" id="PF10272">
    <property type="entry name" value="Tmpp129"/>
    <property type="match status" value="1"/>
</dbReference>